<name>RK2A_CHLSC</name>
<sequence length="275" mass="29799">MAIHLYKTSTPSTRNGAVDSQVKSNPRNNLIYGQHHCGKGRNARGIITAGHRGGGHKRLYRKIDFRRNEKDISGRIVTIEYDPNRNAYICLIHYGDGEKRYILHPRGAIIGDTIVSGTEVPISMGNALPLSATDMPLGTAIHNIEITLGKGGQLARAAGAVAKLIAKEGKSATLRLPSGEVRLISKNCSATVGQVGNVGVNQKSLGRAGSKCWLGKRPVVRGVVMNPVDHPHGGGEGRSPIGRKKPTTPWGYPALGRRSRKRNKYSDSLILRRRK</sequence>
<reference key="1">
    <citation type="journal article" date="2007" name="Mol. Phylogenet. Evol.">
        <title>Phylogenetic and evolutionary implications of complete chloroplast genome sequences of four early-diverging angiosperms: Buxus (Buxaceae), Chloranthus (Chloranthaceae), Dioscorea (Dioscoreaceae), and Illicium (Schisandraceae).</title>
        <authorList>
            <person name="Hansen D.R."/>
            <person name="Dastidar S.G."/>
            <person name="Cai Z."/>
            <person name="Penaflor C."/>
            <person name="Kuehl J.V."/>
            <person name="Boore J.L."/>
            <person name="Jansen R.K."/>
        </authorList>
    </citation>
    <scope>NUCLEOTIDE SEQUENCE [LARGE SCALE GENOMIC DNA]</scope>
</reference>
<comment type="subunit">
    <text evidence="1">Part of the 50S ribosomal subunit.</text>
</comment>
<comment type="subcellular location">
    <subcellularLocation>
        <location>Plastid</location>
        <location>Chloroplast</location>
    </subcellularLocation>
</comment>
<comment type="similarity">
    <text evidence="4">Belongs to the universal ribosomal protein uL2 family.</text>
</comment>
<comment type="caution">
    <text evidence="4">There is 1 gene for this protein in each of the chloroplast inverted repeats; while they are usually identical, in this organism they are not. The other copy is AC A6MMI6.</text>
</comment>
<geneLocation type="chloroplast"/>
<keyword id="KW-0150">Chloroplast</keyword>
<keyword id="KW-0934">Plastid</keyword>
<keyword id="KW-0687">Ribonucleoprotein</keyword>
<keyword id="KW-0689">Ribosomal protein</keyword>
<proteinExistence type="inferred from homology"/>
<dbReference type="EMBL" id="EF380352">
    <property type="protein sequence ID" value="ABQ43301.1"/>
    <property type="molecule type" value="Genomic_DNA"/>
</dbReference>
<dbReference type="SMR" id="A6MMG4"/>
<dbReference type="GO" id="GO:0009507">
    <property type="term" value="C:chloroplast"/>
    <property type="evidence" value="ECO:0007669"/>
    <property type="project" value="UniProtKB-SubCell"/>
</dbReference>
<dbReference type="GO" id="GO:0005762">
    <property type="term" value="C:mitochondrial large ribosomal subunit"/>
    <property type="evidence" value="ECO:0007669"/>
    <property type="project" value="TreeGrafter"/>
</dbReference>
<dbReference type="GO" id="GO:0019843">
    <property type="term" value="F:rRNA binding"/>
    <property type="evidence" value="ECO:0007669"/>
    <property type="project" value="UniProtKB-UniRule"/>
</dbReference>
<dbReference type="GO" id="GO:0003735">
    <property type="term" value="F:structural constituent of ribosome"/>
    <property type="evidence" value="ECO:0007669"/>
    <property type="project" value="InterPro"/>
</dbReference>
<dbReference type="GO" id="GO:0016740">
    <property type="term" value="F:transferase activity"/>
    <property type="evidence" value="ECO:0007669"/>
    <property type="project" value="InterPro"/>
</dbReference>
<dbReference type="GO" id="GO:0032543">
    <property type="term" value="P:mitochondrial translation"/>
    <property type="evidence" value="ECO:0007669"/>
    <property type="project" value="TreeGrafter"/>
</dbReference>
<dbReference type="FunFam" id="4.10.950.10:FF:000001">
    <property type="entry name" value="50S ribosomal protein L2"/>
    <property type="match status" value="1"/>
</dbReference>
<dbReference type="FunFam" id="2.30.30.30:FF:000008">
    <property type="entry name" value="50S ribosomal protein L2, chloroplastic"/>
    <property type="match status" value="1"/>
</dbReference>
<dbReference type="FunFam" id="2.40.50.140:FF:000029">
    <property type="entry name" value="50S ribosomal protein L2, chloroplastic"/>
    <property type="match status" value="1"/>
</dbReference>
<dbReference type="Gene3D" id="2.30.30.30">
    <property type="match status" value="1"/>
</dbReference>
<dbReference type="Gene3D" id="2.40.50.140">
    <property type="entry name" value="Nucleic acid-binding proteins"/>
    <property type="match status" value="1"/>
</dbReference>
<dbReference type="Gene3D" id="4.10.950.10">
    <property type="entry name" value="Ribosomal protein L2, domain 3"/>
    <property type="match status" value="1"/>
</dbReference>
<dbReference type="HAMAP" id="MF_01320_B">
    <property type="entry name" value="Ribosomal_uL2_B"/>
    <property type="match status" value="1"/>
</dbReference>
<dbReference type="InterPro" id="IPR012340">
    <property type="entry name" value="NA-bd_OB-fold"/>
</dbReference>
<dbReference type="InterPro" id="IPR014722">
    <property type="entry name" value="Rib_uL2_dom2"/>
</dbReference>
<dbReference type="InterPro" id="IPR002171">
    <property type="entry name" value="Ribosomal_uL2"/>
</dbReference>
<dbReference type="InterPro" id="IPR005880">
    <property type="entry name" value="Ribosomal_uL2_bac/org-type"/>
</dbReference>
<dbReference type="InterPro" id="IPR022669">
    <property type="entry name" value="Ribosomal_uL2_C"/>
</dbReference>
<dbReference type="InterPro" id="IPR022671">
    <property type="entry name" value="Ribosomal_uL2_CS"/>
</dbReference>
<dbReference type="InterPro" id="IPR014726">
    <property type="entry name" value="Ribosomal_uL2_dom3"/>
</dbReference>
<dbReference type="InterPro" id="IPR022666">
    <property type="entry name" value="Ribosomal_uL2_RNA-bd_dom"/>
</dbReference>
<dbReference type="InterPro" id="IPR008991">
    <property type="entry name" value="Translation_prot_SH3-like_sf"/>
</dbReference>
<dbReference type="NCBIfam" id="TIGR01171">
    <property type="entry name" value="rplB_bact"/>
    <property type="match status" value="1"/>
</dbReference>
<dbReference type="PANTHER" id="PTHR13691:SF5">
    <property type="entry name" value="LARGE RIBOSOMAL SUBUNIT PROTEIN UL2M"/>
    <property type="match status" value="1"/>
</dbReference>
<dbReference type="PANTHER" id="PTHR13691">
    <property type="entry name" value="RIBOSOMAL PROTEIN L2"/>
    <property type="match status" value="1"/>
</dbReference>
<dbReference type="Pfam" id="PF00181">
    <property type="entry name" value="Ribosomal_L2"/>
    <property type="match status" value="1"/>
</dbReference>
<dbReference type="Pfam" id="PF03947">
    <property type="entry name" value="Ribosomal_L2_C"/>
    <property type="match status" value="1"/>
</dbReference>
<dbReference type="PIRSF" id="PIRSF002158">
    <property type="entry name" value="Ribosomal_L2"/>
    <property type="match status" value="1"/>
</dbReference>
<dbReference type="SMART" id="SM01383">
    <property type="entry name" value="Ribosomal_L2"/>
    <property type="match status" value="1"/>
</dbReference>
<dbReference type="SMART" id="SM01382">
    <property type="entry name" value="Ribosomal_L2_C"/>
    <property type="match status" value="1"/>
</dbReference>
<dbReference type="SUPFAM" id="SSF50249">
    <property type="entry name" value="Nucleic acid-binding proteins"/>
    <property type="match status" value="1"/>
</dbReference>
<dbReference type="SUPFAM" id="SSF50104">
    <property type="entry name" value="Translation proteins SH3-like domain"/>
    <property type="match status" value="1"/>
</dbReference>
<dbReference type="PROSITE" id="PS00467">
    <property type="entry name" value="RIBOSOMAL_L2"/>
    <property type="match status" value="1"/>
</dbReference>
<feature type="chain" id="PRO_0000310069" description="Large ribosomal subunit protein uL2cz">
    <location>
        <begin position="1"/>
        <end position="275"/>
    </location>
</feature>
<feature type="region of interest" description="Disordered" evidence="3">
    <location>
        <begin position="1"/>
        <end position="22"/>
    </location>
</feature>
<feature type="region of interest" description="Disordered" evidence="3">
    <location>
        <begin position="226"/>
        <end position="275"/>
    </location>
</feature>
<gene>
    <name type="primary">rpl2-A</name>
</gene>
<organism>
    <name type="scientific">Chloranthus spicatus</name>
    <name type="common">Chulantree</name>
    <name type="synonym">Nigrina spicata</name>
    <dbReference type="NCBI Taxonomy" id="13006"/>
    <lineage>
        <taxon>Eukaryota</taxon>
        <taxon>Viridiplantae</taxon>
        <taxon>Streptophyta</taxon>
        <taxon>Embryophyta</taxon>
        <taxon>Tracheophyta</taxon>
        <taxon>Spermatophyta</taxon>
        <taxon>Magnoliopsida</taxon>
        <taxon>Chloranthales</taxon>
        <taxon>Chloranthaceae</taxon>
        <taxon>Chloranthus</taxon>
    </lineage>
</organism>
<accession>A6MMG4</accession>
<protein>
    <recommendedName>
        <fullName evidence="2">Large ribosomal subunit protein uL2cz</fullName>
    </recommendedName>
    <alternativeName>
        <fullName evidence="4">50S ribosomal protein L2-A, chloroplastic</fullName>
    </alternativeName>
</protein>
<evidence type="ECO:0000250" key="1"/>
<evidence type="ECO:0000255" key="2">
    <source>
        <dbReference type="HAMAP-Rule" id="MF_01320"/>
    </source>
</evidence>
<evidence type="ECO:0000256" key="3">
    <source>
        <dbReference type="SAM" id="MobiDB-lite"/>
    </source>
</evidence>
<evidence type="ECO:0000305" key="4"/>